<reference key="1">
    <citation type="submission" date="2009-06" db="EMBL/GenBank/DDBJ databases">
        <title>Complete sequence of chromosome of Geopacillus sp. WCH70.</title>
        <authorList>
            <consortium name="US DOE Joint Genome Institute"/>
            <person name="Lucas S."/>
            <person name="Copeland A."/>
            <person name="Lapidus A."/>
            <person name="Glavina del Rio T."/>
            <person name="Dalin E."/>
            <person name="Tice H."/>
            <person name="Bruce D."/>
            <person name="Goodwin L."/>
            <person name="Pitluck S."/>
            <person name="Chertkov O."/>
            <person name="Brettin T."/>
            <person name="Detter J.C."/>
            <person name="Han C."/>
            <person name="Larimer F."/>
            <person name="Land M."/>
            <person name="Hauser L."/>
            <person name="Kyrpides N."/>
            <person name="Mikhailova N."/>
            <person name="Brumm P."/>
            <person name="Mead D.A."/>
            <person name="Richardson P."/>
        </authorList>
    </citation>
    <scope>NUCLEOTIDE SEQUENCE [LARGE SCALE GENOMIC DNA]</scope>
    <source>
        <strain>WCH70</strain>
    </source>
</reference>
<feature type="chain" id="PRO_1000203453" description="Protoheme IX farnesyltransferase">
    <location>
        <begin position="1"/>
        <end position="309"/>
    </location>
</feature>
<feature type="transmembrane region" description="Helical" evidence="1">
    <location>
        <begin position="35"/>
        <end position="55"/>
    </location>
</feature>
<feature type="transmembrane region" description="Helical" evidence="1">
    <location>
        <begin position="64"/>
        <end position="84"/>
    </location>
</feature>
<feature type="transmembrane region" description="Helical" evidence="1">
    <location>
        <begin position="114"/>
        <end position="134"/>
    </location>
</feature>
<feature type="transmembrane region" description="Helical" evidence="1">
    <location>
        <begin position="135"/>
        <end position="155"/>
    </location>
</feature>
<feature type="transmembrane region" description="Helical" evidence="1">
    <location>
        <begin position="161"/>
        <end position="181"/>
    </location>
</feature>
<feature type="transmembrane region" description="Helical" evidence="1">
    <location>
        <begin position="187"/>
        <end position="207"/>
    </location>
</feature>
<feature type="transmembrane region" description="Helical" evidence="1">
    <location>
        <begin position="236"/>
        <end position="256"/>
    </location>
</feature>
<feature type="transmembrane region" description="Helical" evidence="1">
    <location>
        <begin position="257"/>
        <end position="277"/>
    </location>
</feature>
<feature type="transmembrane region" description="Helical" evidence="1">
    <location>
        <begin position="289"/>
        <end position="309"/>
    </location>
</feature>
<name>COXX_GEOSW</name>
<sequence>MANLKAIHEQAAHSGEGSRANIRSIWKEFSSVVKIGIVNSNLITTFTGLWLALYFMGEGFLENLHIVFFTLFGSALVIAGSCSINNFIDRDIDQFMERTKTRPTVTGTMEAKRVLWLGIIFITVGTLSLLMTTVTAAIVGLIGAITYIFLYTMWSKRNYTLNTVVGSISGAVPPVIGWTAVDPDFHVVPLVLFLIMFIWQTPHFLALAMKRCEEYRAAGIPMLPVVHGFAMTKRQIVVWVACLLPLPFYLFSLGVPFLTVATLLNVGWLALGLYGFKMKDDLKWAKWMFIYSLNYLTILFVAMVIATLW</sequence>
<comment type="function">
    <text evidence="1">Converts heme B (protoheme IX) to heme O by substitution of the vinyl group on carbon 2 of heme B porphyrin ring with a hydroxyethyl farnesyl side group.</text>
</comment>
<comment type="catalytic activity">
    <reaction evidence="1">
        <text>heme b + (2E,6E)-farnesyl diphosphate + H2O = Fe(II)-heme o + diphosphate</text>
        <dbReference type="Rhea" id="RHEA:28070"/>
        <dbReference type="ChEBI" id="CHEBI:15377"/>
        <dbReference type="ChEBI" id="CHEBI:33019"/>
        <dbReference type="ChEBI" id="CHEBI:60344"/>
        <dbReference type="ChEBI" id="CHEBI:60530"/>
        <dbReference type="ChEBI" id="CHEBI:175763"/>
        <dbReference type="EC" id="2.5.1.141"/>
    </reaction>
</comment>
<comment type="pathway">
    <text evidence="1">Porphyrin-containing compound metabolism; heme O biosynthesis; heme O from protoheme: step 1/1.</text>
</comment>
<comment type="subunit">
    <text evidence="1">Interacts with CtaA.</text>
</comment>
<comment type="subcellular location">
    <subcellularLocation>
        <location evidence="1">Cell membrane</location>
        <topology evidence="1">Multi-pass membrane protein</topology>
    </subcellularLocation>
</comment>
<comment type="miscellaneous">
    <text evidence="1">Carbon 2 of the heme B porphyrin ring is defined according to the Fischer nomenclature.</text>
</comment>
<comment type="similarity">
    <text evidence="1">Belongs to the UbiA prenyltransferase family. Protoheme IX farnesyltransferase subfamily.</text>
</comment>
<proteinExistence type="inferred from homology"/>
<protein>
    <recommendedName>
        <fullName evidence="1">Protoheme IX farnesyltransferase</fullName>
        <ecNumber evidence="1">2.5.1.141</ecNumber>
    </recommendedName>
    <alternativeName>
        <fullName evidence="1">Heme B farnesyltransferase</fullName>
    </alternativeName>
    <alternativeName>
        <fullName evidence="1">Heme O synthase</fullName>
    </alternativeName>
</protein>
<accession>C5D862</accession>
<keyword id="KW-1003">Cell membrane</keyword>
<keyword id="KW-0350">Heme biosynthesis</keyword>
<keyword id="KW-0472">Membrane</keyword>
<keyword id="KW-0808">Transferase</keyword>
<keyword id="KW-0812">Transmembrane</keyword>
<keyword id="KW-1133">Transmembrane helix</keyword>
<dbReference type="EC" id="2.5.1.141" evidence="1"/>
<dbReference type="EMBL" id="CP001638">
    <property type="protein sequence ID" value="ACS23843.1"/>
    <property type="molecule type" value="Genomic_DNA"/>
</dbReference>
<dbReference type="SMR" id="C5D862"/>
<dbReference type="STRING" id="471223.GWCH70_0982"/>
<dbReference type="KEGG" id="gwc:GWCH70_0982"/>
<dbReference type="eggNOG" id="COG0109">
    <property type="taxonomic scope" value="Bacteria"/>
</dbReference>
<dbReference type="HOGENOM" id="CLU_029631_0_0_9"/>
<dbReference type="OrthoDB" id="9814417at2"/>
<dbReference type="UniPathway" id="UPA00834">
    <property type="reaction ID" value="UER00712"/>
</dbReference>
<dbReference type="GO" id="GO:0005886">
    <property type="term" value="C:plasma membrane"/>
    <property type="evidence" value="ECO:0007669"/>
    <property type="project" value="UniProtKB-SubCell"/>
</dbReference>
<dbReference type="GO" id="GO:0008495">
    <property type="term" value="F:protoheme IX farnesyltransferase activity"/>
    <property type="evidence" value="ECO:0007669"/>
    <property type="project" value="UniProtKB-UniRule"/>
</dbReference>
<dbReference type="GO" id="GO:0048034">
    <property type="term" value="P:heme O biosynthetic process"/>
    <property type="evidence" value="ECO:0007669"/>
    <property type="project" value="UniProtKB-UniRule"/>
</dbReference>
<dbReference type="CDD" id="cd13957">
    <property type="entry name" value="PT_UbiA_Cox10"/>
    <property type="match status" value="1"/>
</dbReference>
<dbReference type="FunFam" id="1.10.357.140:FF:000001">
    <property type="entry name" value="Protoheme IX farnesyltransferase"/>
    <property type="match status" value="1"/>
</dbReference>
<dbReference type="Gene3D" id="1.10.357.140">
    <property type="entry name" value="UbiA prenyltransferase"/>
    <property type="match status" value="1"/>
</dbReference>
<dbReference type="HAMAP" id="MF_00154">
    <property type="entry name" value="CyoE_CtaB"/>
    <property type="match status" value="1"/>
</dbReference>
<dbReference type="InterPro" id="IPR006369">
    <property type="entry name" value="Protohaem_IX_farnesylTrfase"/>
</dbReference>
<dbReference type="InterPro" id="IPR000537">
    <property type="entry name" value="UbiA_prenyltransferase"/>
</dbReference>
<dbReference type="InterPro" id="IPR030470">
    <property type="entry name" value="UbiA_prenylTrfase_CS"/>
</dbReference>
<dbReference type="InterPro" id="IPR044878">
    <property type="entry name" value="UbiA_sf"/>
</dbReference>
<dbReference type="NCBIfam" id="TIGR01473">
    <property type="entry name" value="cyoE_ctaB"/>
    <property type="match status" value="1"/>
</dbReference>
<dbReference type="PANTHER" id="PTHR43448">
    <property type="entry name" value="PROTOHEME IX FARNESYLTRANSFERASE, MITOCHONDRIAL"/>
    <property type="match status" value="1"/>
</dbReference>
<dbReference type="PANTHER" id="PTHR43448:SF2">
    <property type="entry name" value="PROTOHEME IX FARNESYLTRANSFERASE, MITOCHONDRIAL"/>
    <property type="match status" value="1"/>
</dbReference>
<dbReference type="Pfam" id="PF01040">
    <property type="entry name" value="UbiA"/>
    <property type="match status" value="1"/>
</dbReference>
<dbReference type="PROSITE" id="PS00943">
    <property type="entry name" value="UBIA"/>
    <property type="match status" value="1"/>
</dbReference>
<gene>
    <name evidence="1" type="primary">ctaB</name>
    <name type="ordered locus">GWCH70_0982</name>
</gene>
<evidence type="ECO:0000255" key="1">
    <source>
        <dbReference type="HAMAP-Rule" id="MF_00154"/>
    </source>
</evidence>
<organism>
    <name type="scientific">Geobacillus sp. (strain WCH70)</name>
    <dbReference type="NCBI Taxonomy" id="471223"/>
    <lineage>
        <taxon>Bacteria</taxon>
        <taxon>Bacillati</taxon>
        <taxon>Bacillota</taxon>
        <taxon>Bacilli</taxon>
        <taxon>Bacillales</taxon>
        <taxon>Anoxybacillaceae</taxon>
        <taxon>Geobacillus</taxon>
    </lineage>
</organism>